<accession>B8EK86</accession>
<organism>
    <name type="scientific">Methylocella silvestris (strain DSM 15510 / CIP 108128 / LMG 27833 / NCIMB 13906 / BL2)</name>
    <dbReference type="NCBI Taxonomy" id="395965"/>
    <lineage>
        <taxon>Bacteria</taxon>
        <taxon>Pseudomonadati</taxon>
        <taxon>Pseudomonadota</taxon>
        <taxon>Alphaproteobacteria</taxon>
        <taxon>Hyphomicrobiales</taxon>
        <taxon>Beijerinckiaceae</taxon>
        <taxon>Methylocella</taxon>
    </lineage>
</organism>
<sequence>MLTKKQSELLRFINERMKETGVPPSFDEMKDALDLRSKSGIHRLIIALEERGFIRRLPNRARALEVLRMPGASAADAGRGRKFEPSVIEGHLGRVRPMPAARDDEDGARAMVAIPVMGRIAAGTPISALQTRSHTLNLPPEMLSQGEHYALEVRGDSMIDAGIFDADTVLIRKQDTAETGDIVVALIDDEEATLKRLRRRGASIALEAANPAYETRIFGPDRVRIQGKLVGLIRRY</sequence>
<evidence type="ECO:0000255" key="1">
    <source>
        <dbReference type="HAMAP-Rule" id="MF_00015"/>
    </source>
</evidence>
<dbReference type="EC" id="3.4.21.88" evidence="1"/>
<dbReference type="EMBL" id="CP001280">
    <property type="protein sequence ID" value="ACK50626.1"/>
    <property type="molecule type" value="Genomic_DNA"/>
</dbReference>
<dbReference type="RefSeq" id="WP_012590696.1">
    <property type="nucleotide sequence ID" value="NC_011666.1"/>
</dbReference>
<dbReference type="SMR" id="B8EK86"/>
<dbReference type="STRING" id="395965.Msil_1678"/>
<dbReference type="MEROPS" id="S24.001"/>
<dbReference type="KEGG" id="msl:Msil_1678"/>
<dbReference type="eggNOG" id="COG1974">
    <property type="taxonomic scope" value="Bacteria"/>
</dbReference>
<dbReference type="HOGENOM" id="CLU_066192_45_2_5"/>
<dbReference type="OrthoDB" id="9802364at2"/>
<dbReference type="Proteomes" id="UP000002257">
    <property type="component" value="Chromosome"/>
</dbReference>
<dbReference type="GO" id="GO:0003677">
    <property type="term" value="F:DNA binding"/>
    <property type="evidence" value="ECO:0007669"/>
    <property type="project" value="UniProtKB-UniRule"/>
</dbReference>
<dbReference type="GO" id="GO:0004252">
    <property type="term" value="F:serine-type endopeptidase activity"/>
    <property type="evidence" value="ECO:0007669"/>
    <property type="project" value="UniProtKB-UniRule"/>
</dbReference>
<dbReference type="GO" id="GO:0006281">
    <property type="term" value="P:DNA repair"/>
    <property type="evidence" value="ECO:0007669"/>
    <property type="project" value="UniProtKB-UniRule"/>
</dbReference>
<dbReference type="GO" id="GO:0006260">
    <property type="term" value="P:DNA replication"/>
    <property type="evidence" value="ECO:0007669"/>
    <property type="project" value="UniProtKB-UniRule"/>
</dbReference>
<dbReference type="GO" id="GO:0045892">
    <property type="term" value="P:negative regulation of DNA-templated transcription"/>
    <property type="evidence" value="ECO:0007669"/>
    <property type="project" value="UniProtKB-UniRule"/>
</dbReference>
<dbReference type="GO" id="GO:0006508">
    <property type="term" value="P:proteolysis"/>
    <property type="evidence" value="ECO:0007669"/>
    <property type="project" value="InterPro"/>
</dbReference>
<dbReference type="GO" id="GO:0009432">
    <property type="term" value="P:SOS response"/>
    <property type="evidence" value="ECO:0007669"/>
    <property type="project" value="UniProtKB-UniRule"/>
</dbReference>
<dbReference type="CDD" id="cd06529">
    <property type="entry name" value="S24_LexA-like"/>
    <property type="match status" value="1"/>
</dbReference>
<dbReference type="FunFam" id="1.10.10.10:FF:000102">
    <property type="entry name" value="LexA repressor"/>
    <property type="match status" value="1"/>
</dbReference>
<dbReference type="FunFam" id="2.10.109.10:FF:000001">
    <property type="entry name" value="LexA repressor"/>
    <property type="match status" value="1"/>
</dbReference>
<dbReference type="Gene3D" id="2.10.109.10">
    <property type="entry name" value="Umud Fragment, subunit A"/>
    <property type="match status" value="1"/>
</dbReference>
<dbReference type="Gene3D" id="1.10.10.10">
    <property type="entry name" value="Winged helix-like DNA-binding domain superfamily/Winged helix DNA-binding domain"/>
    <property type="match status" value="1"/>
</dbReference>
<dbReference type="HAMAP" id="MF_00015">
    <property type="entry name" value="LexA"/>
    <property type="match status" value="1"/>
</dbReference>
<dbReference type="InterPro" id="IPR006200">
    <property type="entry name" value="LexA"/>
</dbReference>
<dbReference type="InterPro" id="IPR039418">
    <property type="entry name" value="LexA-like"/>
</dbReference>
<dbReference type="InterPro" id="IPR036286">
    <property type="entry name" value="LexA/Signal_pep-like_sf"/>
</dbReference>
<dbReference type="InterPro" id="IPR006199">
    <property type="entry name" value="LexA_DNA-bd_dom"/>
</dbReference>
<dbReference type="InterPro" id="IPR050077">
    <property type="entry name" value="LexA_repressor"/>
</dbReference>
<dbReference type="InterPro" id="IPR006197">
    <property type="entry name" value="Peptidase_S24_LexA"/>
</dbReference>
<dbReference type="InterPro" id="IPR015927">
    <property type="entry name" value="Peptidase_S24_S26A/B/C"/>
</dbReference>
<dbReference type="InterPro" id="IPR036388">
    <property type="entry name" value="WH-like_DNA-bd_sf"/>
</dbReference>
<dbReference type="InterPro" id="IPR036390">
    <property type="entry name" value="WH_DNA-bd_sf"/>
</dbReference>
<dbReference type="NCBIfam" id="TIGR00498">
    <property type="entry name" value="lexA"/>
    <property type="match status" value="1"/>
</dbReference>
<dbReference type="PANTHER" id="PTHR33516">
    <property type="entry name" value="LEXA REPRESSOR"/>
    <property type="match status" value="1"/>
</dbReference>
<dbReference type="PANTHER" id="PTHR33516:SF2">
    <property type="entry name" value="LEXA REPRESSOR-RELATED"/>
    <property type="match status" value="1"/>
</dbReference>
<dbReference type="Pfam" id="PF01726">
    <property type="entry name" value="LexA_DNA_bind"/>
    <property type="match status" value="1"/>
</dbReference>
<dbReference type="Pfam" id="PF00717">
    <property type="entry name" value="Peptidase_S24"/>
    <property type="match status" value="1"/>
</dbReference>
<dbReference type="PRINTS" id="PR00726">
    <property type="entry name" value="LEXASERPTASE"/>
</dbReference>
<dbReference type="SUPFAM" id="SSF51306">
    <property type="entry name" value="LexA/Signal peptidase"/>
    <property type="match status" value="1"/>
</dbReference>
<dbReference type="SUPFAM" id="SSF46785">
    <property type="entry name" value="Winged helix' DNA-binding domain"/>
    <property type="match status" value="1"/>
</dbReference>
<name>LEXA_METSB</name>
<proteinExistence type="inferred from homology"/>
<gene>
    <name evidence="1" type="primary">lexA</name>
    <name type="ordered locus">Msil_1678</name>
</gene>
<keyword id="KW-0068">Autocatalytic cleavage</keyword>
<keyword id="KW-0227">DNA damage</keyword>
<keyword id="KW-0234">DNA repair</keyword>
<keyword id="KW-0235">DNA replication</keyword>
<keyword id="KW-0238">DNA-binding</keyword>
<keyword id="KW-0378">Hydrolase</keyword>
<keyword id="KW-1185">Reference proteome</keyword>
<keyword id="KW-0678">Repressor</keyword>
<keyword id="KW-0742">SOS response</keyword>
<keyword id="KW-0804">Transcription</keyword>
<keyword id="KW-0805">Transcription regulation</keyword>
<comment type="function">
    <text evidence="1">Represses a number of genes involved in the response to DNA damage (SOS response), including recA and lexA. In the presence of single-stranded DNA, RecA interacts with LexA causing an autocatalytic cleavage which disrupts the DNA-binding part of LexA, leading to derepression of the SOS regulon and eventually DNA repair.</text>
</comment>
<comment type="catalytic activity">
    <reaction evidence="1">
        <text>Hydrolysis of Ala-|-Gly bond in repressor LexA.</text>
        <dbReference type="EC" id="3.4.21.88"/>
    </reaction>
</comment>
<comment type="subunit">
    <text evidence="1">Homodimer.</text>
</comment>
<comment type="similarity">
    <text evidence="1">Belongs to the peptidase S24 family.</text>
</comment>
<protein>
    <recommendedName>
        <fullName evidence="1">LexA repressor</fullName>
        <ecNumber evidence="1">3.4.21.88</ecNumber>
    </recommendedName>
</protein>
<feature type="chain" id="PRO_1000116610" description="LexA repressor">
    <location>
        <begin position="1"/>
        <end position="236"/>
    </location>
</feature>
<feature type="DNA-binding region" description="H-T-H motif" evidence="1">
    <location>
        <begin position="26"/>
        <end position="46"/>
    </location>
</feature>
<feature type="active site" description="For autocatalytic cleavage activity" evidence="1">
    <location>
        <position position="157"/>
    </location>
</feature>
<feature type="active site" description="For autocatalytic cleavage activity" evidence="1">
    <location>
        <position position="195"/>
    </location>
</feature>
<feature type="site" description="Cleavage; by autolysis" evidence="1">
    <location>
        <begin position="122"/>
        <end position="123"/>
    </location>
</feature>
<reference key="1">
    <citation type="journal article" date="2010" name="J. Bacteriol.">
        <title>Complete genome sequence of the aerobic facultative methanotroph Methylocella silvestris BL2.</title>
        <authorList>
            <person name="Chen Y."/>
            <person name="Crombie A."/>
            <person name="Rahman M.T."/>
            <person name="Dedysh S.N."/>
            <person name="Liesack W."/>
            <person name="Stott M.B."/>
            <person name="Alam M."/>
            <person name="Theisen A.R."/>
            <person name="Murrell J.C."/>
            <person name="Dunfield P.F."/>
        </authorList>
    </citation>
    <scope>NUCLEOTIDE SEQUENCE [LARGE SCALE GENOMIC DNA]</scope>
    <source>
        <strain>DSM 15510 / CIP 108128 / LMG 27833 / NCIMB 13906 / BL2</strain>
    </source>
</reference>